<sequence>MRTYYIFSSGRLRRMDNTLALELETERRVVPVEDIDHIYCFSELDLNTRLLDFLAQKQICLHFFNYYGHYSGSFIPRESQLSGFLLVRQVEHYLDQAKRLELARTFVEGALHNIRRNLEKREYDDICSKLDEIREGIGKTASIEELMSLEAHARKAYYDTWEEITGWEFGSRSKRPPANALNALISFGNAMMYTVVLKEIYRTALNPTISYLHEPSERRYSLALDVAEIFKPVFVDRLIFRLINLNMLKETHFDTNVNFVYLTEGGRKVFVKEFEETLEKTILHRKLKRNIRYKSLVRLDLYKLIKHLLGEEKYSPMKVWW</sequence>
<proteinExistence type="inferred from homology"/>
<evidence type="ECO:0000255" key="1">
    <source>
        <dbReference type="HAMAP-Rule" id="MF_01470"/>
    </source>
</evidence>
<protein>
    <recommendedName>
        <fullName evidence="1">CRISPR-associated endonuclease Cas1 2</fullName>
        <ecNumber evidence="1">3.1.-.-</ecNumber>
    </recommendedName>
</protein>
<keyword id="KW-0051">Antiviral defense</keyword>
<keyword id="KW-0238">DNA-binding</keyword>
<keyword id="KW-0255">Endonuclease</keyword>
<keyword id="KW-0378">Hydrolase</keyword>
<keyword id="KW-0460">Magnesium</keyword>
<keyword id="KW-0464">Manganese</keyword>
<keyword id="KW-0479">Metal-binding</keyword>
<keyword id="KW-0540">Nuclease</keyword>
<comment type="function">
    <text evidence="1">CRISPR (clustered regularly interspaced short palindromic repeat), is an adaptive immune system that provides protection against mobile genetic elements (viruses, transposable elements and conjugative plasmids). CRISPR clusters contain spacers, sequences complementary to antecedent mobile elements, and target invading nucleic acids. CRISPR clusters are transcribed and processed into CRISPR RNA (crRNA). Acts as a dsDNA endonuclease. Involved in the integration of spacer DNA into the CRISPR cassette.</text>
</comment>
<comment type="cofactor">
    <cofactor evidence="1">
        <name>Mg(2+)</name>
        <dbReference type="ChEBI" id="CHEBI:18420"/>
    </cofactor>
    <cofactor evidence="1">
        <name>Mn(2+)</name>
        <dbReference type="ChEBI" id="CHEBI:29035"/>
    </cofactor>
</comment>
<comment type="subunit">
    <text evidence="1">Homodimer, forms a heterotetramer with a Cas2 homodimer.</text>
</comment>
<comment type="similarity">
    <text evidence="1">Belongs to the CRISPR-associated endonuclease Cas1 family.</text>
</comment>
<gene>
    <name evidence="1" type="primary">cas1-2</name>
    <name type="ordered locus">Moth_1727</name>
</gene>
<name>CAS1B_MOOTA</name>
<reference key="1">
    <citation type="journal article" date="2008" name="Environ. Microbiol.">
        <title>The complete genome sequence of Moorella thermoacetica (f. Clostridium thermoaceticum).</title>
        <authorList>
            <person name="Pierce E."/>
            <person name="Xie G."/>
            <person name="Barabote R.D."/>
            <person name="Saunders E."/>
            <person name="Han C.S."/>
            <person name="Detter J.C."/>
            <person name="Richardson P."/>
            <person name="Brettin T.S."/>
            <person name="Das A."/>
            <person name="Ljungdahl L.G."/>
            <person name="Ragsdale S.W."/>
        </authorList>
    </citation>
    <scope>NUCLEOTIDE SEQUENCE [LARGE SCALE GENOMIC DNA]</scope>
    <source>
        <strain>ATCC 39073 / JCM 9320</strain>
    </source>
</reference>
<accession>Q2RHR1</accession>
<organism>
    <name type="scientific">Moorella thermoacetica (strain ATCC 39073 / JCM 9320)</name>
    <dbReference type="NCBI Taxonomy" id="264732"/>
    <lineage>
        <taxon>Bacteria</taxon>
        <taxon>Bacillati</taxon>
        <taxon>Bacillota</taxon>
        <taxon>Clostridia</taxon>
        <taxon>Moorellales</taxon>
        <taxon>Moorellaceae</taxon>
        <taxon>Moorella</taxon>
    </lineage>
</organism>
<dbReference type="EC" id="3.1.-.-" evidence="1"/>
<dbReference type="EMBL" id="CP000232">
    <property type="protein sequence ID" value="ABC20028.1"/>
    <property type="molecule type" value="Genomic_DNA"/>
</dbReference>
<dbReference type="RefSeq" id="YP_430571.1">
    <property type="nucleotide sequence ID" value="NC_007644.1"/>
</dbReference>
<dbReference type="SMR" id="Q2RHR1"/>
<dbReference type="STRING" id="264732.Moth_1727"/>
<dbReference type="EnsemblBacteria" id="ABC20028">
    <property type="protein sequence ID" value="ABC20028"/>
    <property type="gene ID" value="Moth_1727"/>
</dbReference>
<dbReference type="KEGG" id="mta:Moth_1727"/>
<dbReference type="PATRIC" id="fig|264732.11.peg.1873"/>
<dbReference type="eggNOG" id="COG1518">
    <property type="taxonomic scope" value="Bacteria"/>
</dbReference>
<dbReference type="HOGENOM" id="CLU_052779_2_0_9"/>
<dbReference type="OrthoDB" id="9803119at2"/>
<dbReference type="GO" id="GO:0003677">
    <property type="term" value="F:DNA binding"/>
    <property type="evidence" value="ECO:0007669"/>
    <property type="project" value="UniProtKB-KW"/>
</dbReference>
<dbReference type="GO" id="GO:0004520">
    <property type="term" value="F:DNA endonuclease activity"/>
    <property type="evidence" value="ECO:0007669"/>
    <property type="project" value="InterPro"/>
</dbReference>
<dbReference type="GO" id="GO:0046872">
    <property type="term" value="F:metal ion binding"/>
    <property type="evidence" value="ECO:0007669"/>
    <property type="project" value="UniProtKB-UniRule"/>
</dbReference>
<dbReference type="GO" id="GO:0051607">
    <property type="term" value="P:defense response to virus"/>
    <property type="evidence" value="ECO:0007669"/>
    <property type="project" value="UniProtKB-UniRule"/>
</dbReference>
<dbReference type="GO" id="GO:0043571">
    <property type="term" value="P:maintenance of CRISPR repeat elements"/>
    <property type="evidence" value="ECO:0007669"/>
    <property type="project" value="UniProtKB-UniRule"/>
</dbReference>
<dbReference type="CDD" id="cd09722">
    <property type="entry name" value="Cas1_I-B"/>
    <property type="match status" value="1"/>
</dbReference>
<dbReference type="Gene3D" id="1.20.120.920">
    <property type="entry name" value="CRISPR-associated endonuclease Cas1, C-terminal domain"/>
    <property type="match status" value="1"/>
</dbReference>
<dbReference type="Gene3D" id="3.100.10.20">
    <property type="entry name" value="CRISPR-associated endonuclease Cas1, N-terminal domain"/>
    <property type="match status" value="1"/>
</dbReference>
<dbReference type="HAMAP" id="MF_01470">
    <property type="entry name" value="Cas1"/>
    <property type="match status" value="1"/>
</dbReference>
<dbReference type="InterPro" id="IPR002729">
    <property type="entry name" value="CRISPR-assoc_Cas1"/>
</dbReference>
<dbReference type="InterPro" id="IPR042206">
    <property type="entry name" value="CRISPR-assoc_Cas1_C"/>
</dbReference>
<dbReference type="InterPro" id="IPR019858">
    <property type="entry name" value="CRISPR-assoc_Cas1_HMARI/TNEAP"/>
</dbReference>
<dbReference type="InterPro" id="IPR042211">
    <property type="entry name" value="CRISPR-assoc_Cas1_N"/>
</dbReference>
<dbReference type="NCBIfam" id="TIGR00287">
    <property type="entry name" value="cas1"/>
    <property type="match status" value="1"/>
</dbReference>
<dbReference type="NCBIfam" id="TIGR03641">
    <property type="entry name" value="cas1_HMARI"/>
    <property type="match status" value="1"/>
</dbReference>
<dbReference type="PANTHER" id="PTHR43219">
    <property type="entry name" value="CRISPR-ASSOCIATED ENDONUCLEASE CAS1"/>
    <property type="match status" value="1"/>
</dbReference>
<dbReference type="PANTHER" id="PTHR43219:SF2">
    <property type="entry name" value="CRISPR-ASSOCIATED ENDONUCLEASE CAS1"/>
    <property type="match status" value="1"/>
</dbReference>
<dbReference type="Pfam" id="PF01867">
    <property type="entry name" value="Cas_Cas1"/>
    <property type="match status" value="1"/>
</dbReference>
<feature type="chain" id="PRO_0000417081" description="CRISPR-associated endonuclease Cas1 2">
    <location>
        <begin position="1"/>
        <end position="321"/>
    </location>
</feature>
<feature type="binding site" evidence="1">
    <location>
        <position position="150"/>
    </location>
    <ligand>
        <name>Mn(2+)</name>
        <dbReference type="ChEBI" id="CHEBI:29035"/>
    </ligand>
</feature>
<feature type="binding site" evidence="1">
    <location>
        <position position="213"/>
    </location>
    <ligand>
        <name>Mn(2+)</name>
        <dbReference type="ChEBI" id="CHEBI:29035"/>
    </ligand>
</feature>
<feature type="binding site" evidence="1">
    <location>
        <position position="228"/>
    </location>
    <ligand>
        <name>Mn(2+)</name>
        <dbReference type="ChEBI" id="CHEBI:29035"/>
    </ligand>
</feature>